<protein>
    <recommendedName>
        <fullName evidence="1">tRNA-cytidine(32) 2-sulfurtransferase</fullName>
        <ecNumber evidence="1">2.8.1.-</ecNumber>
    </recommendedName>
    <alternativeName>
        <fullName evidence="1">Two-thiocytidine biosynthesis protein A</fullName>
    </alternativeName>
    <alternativeName>
        <fullName evidence="1">tRNA 2-thiocytidine biosynthesis protein TtcA</fullName>
    </alternativeName>
</protein>
<proteinExistence type="inferred from homology"/>
<evidence type="ECO:0000255" key="1">
    <source>
        <dbReference type="HAMAP-Rule" id="MF_01850"/>
    </source>
</evidence>
<gene>
    <name evidence="1" type="primary">ttcA</name>
    <name type="ordered locus">ABO_1266</name>
</gene>
<accession>Q0VQ34</accession>
<name>TTCA_ALCBS</name>
<dbReference type="EC" id="2.8.1.-" evidence="1"/>
<dbReference type="EMBL" id="AM286690">
    <property type="protein sequence ID" value="CAL16714.1"/>
    <property type="molecule type" value="Genomic_DNA"/>
</dbReference>
<dbReference type="RefSeq" id="WP_011588549.1">
    <property type="nucleotide sequence ID" value="NC_008260.1"/>
</dbReference>
<dbReference type="SMR" id="Q0VQ34"/>
<dbReference type="STRING" id="393595.ABO_1266"/>
<dbReference type="KEGG" id="abo:ABO_1266"/>
<dbReference type="eggNOG" id="COG0037">
    <property type="taxonomic scope" value="Bacteria"/>
</dbReference>
<dbReference type="HOGENOM" id="CLU_026481_0_0_6"/>
<dbReference type="OrthoDB" id="9801054at2"/>
<dbReference type="Proteomes" id="UP000008871">
    <property type="component" value="Chromosome"/>
</dbReference>
<dbReference type="GO" id="GO:0005737">
    <property type="term" value="C:cytoplasm"/>
    <property type="evidence" value="ECO:0007669"/>
    <property type="project" value="UniProtKB-SubCell"/>
</dbReference>
<dbReference type="GO" id="GO:0051539">
    <property type="term" value="F:4 iron, 4 sulfur cluster binding"/>
    <property type="evidence" value="ECO:0007669"/>
    <property type="project" value="UniProtKB-UniRule"/>
</dbReference>
<dbReference type="GO" id="GO:0005524">
    <property type="term" value="F:ATP binding"/>
    <property type="evidence" value="ECO:0007669"/>
    <property type="project" value="UniProtKB-UniRule"/>
</dbReference>
<dbReference type="GO" id="GO:0000287">
    <property type="term" value="F:magnesium ion binding"/>
    <property type="evidence" value="ECO:0007669"/>
    <property type="project" value="UniProtKB-UniRule"/>
</dbReference>
<dbReference type="GO" id="GO:0016783">
    <property type="term" value="F:sulfurtransferase activity"/>
    <property type="evidence" value="ECO:0007669"/>
    <property type="project" value="UniProtKB-UniRule"/>
</dbReference>
<dbReference type="GO" id="GO:0000049">
    <property type="term" value="F:tRNA binding"/>
    <property type="evidence" value="ECO:0007669"/>
    <property type="project" value="UniProtKB-KW"/>
</dbReference>
<dbReference type="GO" id="GO:0034227">
    <property type="term" value="P:tRNA thio-modification"/>
    <property type="evidence" value="ECO:0007669"/>
    <property type="project" value="UniProtKB-UniRule"/>
</dbReference>
<dbReference type="CDD" id="cd24138">
    <property type="entry name" value="TtcA-like"/>
    <property type="match status" value="1"/>
</dbReference>
<dbReference type="Gene3D" id="3.40.50.620">
    <property type="entry name" value="HUPs"/>
    <property type="match status" value="1"/>
</dbReference>
<dbReference type="HAMAP" id="MF_01850">
    <property type="entry name" value="TtcA"/>
    <property type="match status" value="1"/>
</dbReference>
<dbReference type="InterPro" id="IPR014729">
    <property type="entry name" value="Rossmann-like_a/b/a_fold"/>
</dbReference>
<dbReference type="InterPro" id="IPR011063">
    <property type="entry name" value="TilS/TtcA_N"/>
</dbReference>
<dbReference type="InterPro" id="IPR012089">
    <property type="entry name" value="tRNA_Cyd_32_2_STrfase"/>
</dbReference>
<dbReference type="InterPro" id="IPR035107">
    <property type="entry name" value="tRNA_thiolation_TtcA_Ctu1"/>
</dbReference>
<dbReference type="NCBIfam" id="NF007972">
    <property type="entry name" value="PRK10696.1"/>
    <property type="match status" value="1"/>
</dbReference>
<dbReference type="PANTHER" id="PTHR43686:SF1">
    <property type="entry name" value="AMINOTRAN_5 DOMAIN-CONTAINING PROTEIN"/>
    <property type="match status" value="1"/>
</dbReference>
<dbReference type="PANTHER" id="PTHR43686">
    <property type="entry name" value="SULFURTRANSFERASE-RELATED"/>
    <property type="match status" value="1"/>
</dbReference>
<dbReference type="Pfam" id="PF01171">
    <property type="entry name" value="ATP_bind_3"/>
    <property type="match status" value="1"/>
</dbReference>
<dbReference type="PIRSF" id="PIRSF004976">
    <property type="entry name" value="ATPase_YdaO"/>
    <property type="match status" value="1"/>
</dbReference>
<dbReference type="SUPFAM" id="SSF52402">
    <property type="entry name" value="Adenine nucleotide alpha hydrolases-like"/>
    <property type="match status" value="1"/>
</dbReference>
<keyword id="KW-0004">4Fe-4S</keyword>
<keyword id="KW-0067">ATP-binding</keyword>
<keyword id="KW-0963">Cytoplasm</keyword>
<keyword id="KW-0408">Iron</keyword>
<keyword id="KW-0411">Iron-sulfur</keyword>
<keyword id="KW-0460">Magnesium</keyword>
<keyword id="KW-0479">Metal-binding</keyword>
<keyword id="KW-0547">Nucleotide-binding</keyword>
<keyword id="KW-1185">Reference proteome</keyword>
<keyword id="KW-0694">RNA-binding</keyword>
<keyword id="KW-0808">Transferase</keyword>
<keyword id="KW-0819">tRNA processing</keyword>
<keyword id="KW-0820">tRNA-binding</keyword>
<organism>
    <name type="scientific">Alcanivorax borkumensis (strain ATCC 700651 / DSM 11573 / NCIMB 13689 / SK2)</name>
    <dbReference type="NCBI Taxonomy" id="393595"/>
    <lineage>
        <taxon>Bacteria</taxon>
        <taxon>Pseudomonadati</taxon>
        <taxon>Pseudomonadota</taxon>
        <taxon>Gammaproteobacteria</taxon>
        <taxon>Oceanospirillales</taxon>
        <taxon>Alcanivoracaceae</taxon>
        <taxon>Alcanivorax</taxon>
    </lineage>
</organism>
<feature type="chain" id="PRO_0000348657" description="tRNA-cytidine(32) 2-sulfurtransferase">
    <location>
        <begin position="1"/>
        <end position="284"/>
    </location>
</feature>
<feature type="short sequence motif" description="PP-loop motif" evidence="1">
    <location>
        <begin position="45"/>
        <end position="50"/>
    </location>
</feature>
<feature type="binding site" evidence="1">
    <location>
        <position position="120"/>
    </location>
    <ligand>
        <name>[4Fe-4S] cluster</name>
        <dbReference type="ChEBI" id="CHEBI:49883"/>
    </ligand>
</feature>
<feature type="binding site" evidence="1">
    <location>
        <position position="123"/>
    </location>
    <ligand>
        <name>[4Fe-4S] cluster</name>
        <dbReference type="ChEBI" id="CHEBI:49883"/>
    </ligand>
</feature>
<feature type="binding site" evidence="1">
    <location>
        <position position="211"/>
    </location>
    <ligand>
        <name>[4Fe-4S] cluster</name>
        <dbReference type="ChEBI" id="CHEBI:49883"/>
    </ligand>
</feature>
<sequence length="284" mass="32317">MSDNADTKKRTRLNKLQKKLRRETGRAIADFNMISEGDKVMVCLSGGKDSYTMLEILRNLQHSAPVNFELVAVNMDQKQPGFPEHILPEYLEKEGVAYHILEKDTYSIVKEKVPEGKTTCGLCSRLRRGSLYGFAEEIGANKIALGHHRDDIVETLFLNMFYGGKMKAMPPKLRSDDSRNVVIRPLAYCREKDIIEFSALKEYPIIPCNLCGSQKNLQRQVIKEMLQQWDKQQPGRIENIFAAVQNIAPSQLADTRLFDFENLEQGQQQGGDQAHRLDVVNLFG</sequence>
<reference key="1">
    <citation type="journal article" date="2006" name="Nat. Biotechnol.">
        <title>Genome sequence of the ubiquitous hydrocarbon-degrading marine bacterium Alcanivorax borkumensis.</title>
        <authorList>
            <person name="Schneiker S."/>
            <person name="Martins dos Santos V.A.P."/>
            <person name="Bartels D."/>
            <person name="Bekel T."/>
            <person name="Brecht M."/>
            <person name="Buhrmester J."/>
            <person name="Chernikova T.N."/>
            <person name="Denaro R."/>
            <person name="Ferrer M."/>
            <person name="Gertler C."/>
            <person name="Goesmann A."/>
            <person name="Golyshina O.V."/>
            <person name="Kaminski F."/>
            <person name="Khachane A.N."/>
            <person name="Lang S."/>
            <person name="Linke B."/>
            <person name="McHardy A.C."/>
            <person name="Meyer F."/>
            <person name="Nechitaylo T."/>
            <person name="Puehler A."/>
            <person name="Regenhardt D."/>
            <person name="Rupp O."/>
            <person name="Sabirova J.S."/>
            <person name="Selbitschka W."/>
            <person name="Yakimov M.M."/>
            <person name="Timmis K.N."/>
            <person name="Vorhoelter F.-J."/>
            <person name="Weidner S."/>
            <person name="Kaiser O."/>
            <person name="Golyshin P.N."/>
        </authorList>
    </citation>
    <scope>NUCLEOTIDE SEQUENCE [LARGE SCALE GENOMIC DNA]</scope>
    <source>
        <strain>ATCC 700651 / DSM 11573 / NCIMB 13689 / SK2</strain>
    </source>
</reference>
<comment type="function">
    <text evidence="1">Catalyzes the ATP-dependent 2-thiolation of cytidine in position 32 of tRNA, to form 2-thiocytidine (s(2)C32). The sulfur atoms are provided by the cysteine/cysteine desulfurase (IscS) system.</text>
</comment>
<comment type="catalytic activity">
    <reaction evidence="1">
        <text>cytidine(32) in tRNA + S-sulfanyl-L-cysteinyl-[cysteine desulfurase] + AH2 + ATP = 2-thiocytidine(32) in tRNA + L-cysteinyl-[cysteine desulfurase] + A + AMP + diphosphate + H(+)</text>
        <dbReference type="Rhea" id="RHEA:57048"/>
        <dbReference type="Rhea" id="RHEA-COMP:10288"/>
        <dbReference type="Rhea" id="RHEA-COMP:12157"/>
        <dbReference type="Rhea" id="RHEA-COMP:12158"/>
        <dbReference type="Rhea" id="RHEA-COMP:14821"/>
        <dbReference type="ChEBI" id="CHEBI:13193"/>
        <dbReference type="ChEBI" id="CHEBI:15378"/>
        <dbReference type="ChEBI" id="CHEBI:17499"/>
        <dbReference type="ChEBI" id="CHEBI:29950"/>
        <dbReference type="ChEBI" id="CHEBI:30616"/>
        <dbReference type="ChEBI" id="CHEBI:33019"/>
        <dbReference type="ChEBI" id="CHEBI:61963"/>
        <dbReference type="ChEBI" id="CHEBI:82748"/>
        <dbReference type="ChEBI" id="CHEBI:141453"/>
        <dbReference type="ChEBI" id="CHEBI:456215"/>
    </reaction>
    <physiologicalReaction direction="left-to-right" evidence="1">
        <dbReference type="Rhea" id="RHEA:57049"/>
    </physiologicalReaction>
</comment>
<comment type="cofactor">
    <cofactor evidence="1">
        <name>Mg(2+)</name>
        <dbReference type="ChEBI" id="CHEBI:18420"/>
    </cofactor>
</comment>
<comment type="cofactor">
    <cofactor evidence="1">
        <name>[4Fe-4S] cluster</name>
        <dbReference type="ChEBI" id="CHEBI:49883"/>
    </cofactor>
    <text evidence="1">Binds 1 [4Fe-4S] cluster per subunit. The cluster is chelated by three Cys residues, the fourth Fe has a free coordination site that may bind a sulfur atom transferred from the persulfide of IscS.</text>
</comment>
<comment type="pathway">
    <text evidence="1">tRNA modification.</text>
</comment>
<comment type="subunit">
    <text evidence="1">Homodimer.</text>
</comment>
<comment type="subcellular location">
    <subcellularLocation>
        <location evidence="1">Cytoplasm</location>
    </subcellularLocation>
</comment>
<comment type="miscellaneous">
    <text evidence="1">The thiolation reaction likely consists of two steps: a first activation step by ATP to form an adenylated intermediate of the target base of tRNA, and a second nucleophilic substitution step of the sulfur (S) atom supplied by the hydrosulfide attached to the Fe-S cluster.</text>
</comment>
<comment type="similarity">
    <text evidence="1">Belongs to the TtcA family.</text>
</comment>